<evidence type="ECO:0000255" key="1">
    <source>
        <dbReference type="HAMAP-Rule" id="MF_00089"/>
    </source>
</evidence>
<sequence>MSSSRKQARLDAKTNIESLSVQPYPNSNKVYIEGSRPDIRVPMREISLADSLVGGTKESPIFEPNEPIQVYDTSGVYTDPSYDIDVYKGLPKLRQEWIEERNDTELLDGVSSVYSQERLADETLDELRYGNLPTIRRAKQGQCVTQLHYARQGIITPEMEYIAIRENMGRQKFADEQLNHQHPGHSFGANLPKEITPEFVRREVAEGRAIIPSNINHPEAEPMIIGRNFLIKVNANIGNSSVSSSIEEEVEKLVWSTRWGGDTVMDLSTGRNIHETREWILRNSPVPIGTVPMYQALEKVNGVAENLNWEVMRDTLIEQAEQGVDYFTIHAGLLLRYVPMTAKRVTGIVSRGGSIIAKWCLAHHQESFLYTHFREICEICAKYDVALSLGDGLRPGSVADANDEAQFAELRTLGELTKVAWEYDVQVIIEGPGHVPMHMIKENMDEQLKHCHEAPFYTLGPLTTDIAPGYDHITSGIGAAMIGWYGCAMLCYVTPKEHLGLPNKDDVKTGLITYKLAAHAGDLAKGHPGAQIRDNALSKARFEFRWEDQFNLSLDPITAREYHDETLPQESGKVAHFCSMCGPKFCSMKISQEVREYAKDSEQVALDQAIEIKMIDDPLEGMRQKSEEFKASGSELYHPVVEAE</sequence>
<dbReference type="EC" id="4.1.99.17" evidence="1"/>
<dbReference type="EMBL" id="CP000020">
    <property type="protein sequence ID" value="AAW84527.1"/>
    <property type="molecule type" value="Genomic_DNA"/>
</dbReference>
<dbReference type="RefSeq" id="WP_011260913.1">
    <property type="nucleotide sequence ID" value="NC_006840.2"/>
</dbReference>
<dbReference type="RefSeq" id="YP_203415.1">
    <property type="nucleotide sequence ID" value="NC_006840.2"/>
</dbReference>
<dbReference type="SMR" id="Q5E8W9"/>
<dbReference type="STRING" id="312309.VF_0032"/>
<dbReference type="EnsemblBacteria" id="AAW84527">
    <property type="protein sequence ID" value="AAW84527"/>
    <property type="gene ID" value="VF_0032"/>
</dbReference>
<dbReference type="GeneID" id="54162662"/>
<dbReference type="KEGG" id="vfi:VF_0032"/>
<dbReference type="PATRIC" id="fig|312309.11.peg.34"/>
<dbReference type="eggNOG" id="COG0422">
    <property type="taxonomic scope" value="Bacteria"/>
</dbReference>
<dbReference type="HOGENOM" id="CLU_013181_2_1_6"/>
<dbReference type="OrthoDB" id="9805897at2"/>
<dbReference type="UniPathway" id="UPA00060"/>
<dbReference type="Proteomes" id="UP000000537">
    <property type="component" value="Chromosome I"/>
</dbReference>
<dbReference type="GO" id="GO:0005829">
    <property type="term" value="C:cytosol"/>
    <property type="evidence" value="ECO:0007669"/>
    <property type="project" value="TreeGrafter"/>
</dbReference>
<dbReference type="GO" id="GO:0051539">
    <property type="term" value="F:4 iron, 4 sulfur cluster binding"/>
    <property type="evidence" value="ECO:0007669"/>
    <property type="project" value="UniProtKB-KW"/>
</dbReference>
<dbReference type="GO" id="GO:0016830">
    <property type="term" value="F:carbon-carbon lyase activity"/>
    <property type="evidence" value="ECO:0007669"/>
    <property type="project" value="InterPro"/>
</dbReference>
<dbReference type="GO" id="GO:0008270">
    <property type="term" value="F:zinc ion binding"/>
    <property type="evidence" value="ECO:0007669"/>
    <property type="project" value="UniProtKB-UniRule"/>
</dbReference>
<dbReference type="GO" id="GO:0009228">
    <property type="term" value="P:thiamine biosynthetic process"/>
    <property type="evidence" value="ECO:0007669"/>
    <property type="project" value="UniProtKB-KW"/>
</dbReference>
<dbReference type="GO" id="GO:0009229">
    <property type="term" value="P:thiamine diphosphate biosynthetic process"/>
    <property type="evidence" value="ECO:0007669"/>
    <property type="project" value="UniProtKB-UniRule"/>
</dbReference>
<dbReference type="FunFam" id="3.20.20.540:FF:000001">
    <property type="entry name" value="Phosphomethylpyrimidine synthase"/>
    <property type="match status" value="1"/>
</dbReference>
<dbReference type="Gene3D" id="6.10.250.620">
    <property type="match status" value="1"/>
</dbReference>
<dbReference type="Gene3D" id="3.20.20.540">
    <property type="entry name" value="Radical SAM ThiC family, central domain"/>
    <property type="match status" value="1"/>
</dbReference>
<dbReference type="HAMAP" id="MF_00089">
    <property type="entry name" value="ThiC"/>
    <property type="match status" value="1"/>
</dbReference>
<dbReference type="InterPro" id="IPR037509">
    <property type="entry name" value="ThiC"/>
</dbReference>
<dbReference type="InterPro" id="IPR025747">
    <property type="entry name" value="ThiC-associated_dom"/>
</dbReference>
<dbReference type="InterPro" id="IPR038521">
    <property type="entry name" value="ThiC/Bza_core_dom"/>
</dbReference>
<dbReference type="InterPro" id="IPR002817">
    <property type="entry name" value="ThiC/BzaA/B"/>
</dbReference>
<dbReference type="NCBIfam" id="NF006763">
    <property type="entry name" value="PRK09284.1"/>
    <property type="match status" value="1"/>
</dbReference>
<dbReference type="NCBIfam" id="NF009895">
    <property type="entry name" value="PRK13352.1"/>
    <property type="match status" value="1"/>
</dbReference>
<dbReference type="NCBIfam" id="TIGR00190">
    <property type="entry name" value="thiC"/>
    <property type="match status" value="1"/>
</dbReference>
<dbReference type="PANTHER" id="PTHR30557:SF1">
    <property type="entry name" value="PHOSPHOMETHYLPYRIMIDINE SYNTHASE, CHLOROPLASTIC"/>
    <property type="match status" value="1"/>
</dbReference>
<dbReference type="PANTHER" id="PTHR30557">
    <property type="entry name" value="THIAMINE BIOSYNTHESIS PROTEIN THIC"/>
    <property type="match status" value="1"/>
</dbReference>
<dbReference type="Pfam" id="PF13667">
    <property type="entry name" value="ThiC-associated"/>
    <property type="match status" value="1"/>
</dbReference>
<dbReference type="Pfam" id="PF01964">
    <property type="entry name" value="ThiC_Rad_SAM"/>
    <property type="match status" value="1"/>
</dbReference>
<dbReference type="SFLD" id="SFLDF00407">
    <property type="entry name" value="phosphomethylpyrimidine_syntha"/>
    <property type="match status" value="1"/>
</dbReference>
<dbReference type="SFLD" id="SFLDG01114">
    <property type="entry name" value="phosphomethylpyrimidine_syntha"/>
    <property type="match status" value="1"/>
</dbReference>
<dbReference type="SFLD" id="SFLDS00113">
    <property type="entry name" value="Radical_SAM_Phosphomethylpyrim"/>
    <property type="match status" value="1"/>
</dbReference>
<comment type="function">
    <text evidence="1">Catalyzes the synthesis of the hydroxymethylpyrimidine phosphate (HMP-P) moiety of thiamine from aminoimidazole ribotide (AIR) in a radical S-adenosyl-L-methionine (SAM)-dependent reaction.</text>
</comment>
<comment type="catalytic activity">
    <reaction evidence="1">
        <text>5-amino-1-(5-phospho-beta-D-ribosyl)imidazole + S-adenosyl-L-methionine = 4-amino-2-methyl-5-(phosphooxymethyl)pyrimidine + CO + 5'-deoxyadenosine + formate + L-methionine + 3 H(+)</text>
        <dbReference type="Rhea" id="RHEA:24840"/>
        <dbReference type="ChEBI" id="CHEBI:15378"/>
        <dbReference type="ChEBI" id="CHEBI:15740"/>
        <dbReference type="ChEBI" id="CHEBI:17245"/>
        <dbReference type="ChEBI" id="CHEBI:17319"/>
        <dbReference type="ChEBI" id="CHEBI:57844"/>
        <dbReference type="ChEBI" id="CHEBI:58354"/>
        <dbReference type="ChEBI" id="CHEBI:59789"/>
        <dbReference type="ChEBI" id="CHEBI:137981"/>
        <dbReference type="EC" id="4.1.99.17"/>
    </reaction>
</comment>
<comment type="cofactor">
    <cofactor evidence="1">
        <name>[4Fe-4S] cluster</name>
        <dbReference type="ChEBI" id="CHEBI:49883"/>
    </cofactor>
    <text evidence="1">Binds 1 [4Fe-4S] cluster per subunit. The cluster is coordinated with 3 cysteines and an exchangeable S-adenosyl-L-methionine.</text>
</comment>
<comment type="pathway">
    <text evidence="1">Cofactor biosynthesis; thiamine diphosphate biosynthesis.</text>
</comment>
<comment type="subunit">
    <text evidence="1">Homodimer.</text>
</comment>
<comment type="similarity">
    <text evidence="1">Belongs to the ThiC family.</text>
</comment>
<proteinExistence type="inferred from homology"/>
<accession>Q5E8W9</accession>
<organism>
    <name type="scientific">Aliivibrio fischeri (strain ATCC 700601 / ES114)</name>
    <name type="common">Vibrio fischeri</name>
    <dbReference type="NCBI Taxonomy" id="312309"/>
    <lineage>
        <taxon>Bacteria</taxon>
        <taxon>Pseudomonadati</taxon>
        <taxon>Pseudomonadota</taxon>
        <taxon>Gammaproteobacteria</taxon>
        <taxon>Vibrionales</taxon>
        <taxon>Vibrionaceae</taxon>
        <taxon>Aliivibrio</taxon>
    </lineage>
</organism>
<protein>
    <recommendedName>
        <fullName evidence="1">Phosphomethylpyrimidine synthase</fullName>
        <ecNumber evidence="1">4.1.99.17</ecNumber>
    </recommendedName>
    <alternativeName>
        <fullName evidence="1">Hydroxymethylpyrimidine phosphate synthase</fullName>
        <shortName evidence="1">HMP-P synthase</shortName>
        <shortName evidence="1">HMP-phosphate synthase</shortName>
        <shortName evidence="1">HMPP synthase</shortName>
    </alternativeName>
    <alternativeName>
        <fullName evidence="1">Thiamine biosynthesis protein ThiC</fullName>
    </alternativeName>
</protein>
<feature type="chain" id="PRO_0000242317" description="Phosphomethylpyrimidine synthase">
    <location>
        <begin position="1"/>
        <end position="644"/>
    </location>
</feature>
<feature type="binding site" evidence="1">
    <location>
        <position position="236"/>
    </location>
    <ligand>
        <name>substrate</name>
    </ligand>
</feature>
<feature type="binding site" evidence="1">
    <location>
        <position position="265"/>
    </location>
    <ligand>
        <name>substrate</name>
    </ligand>
</feature>
<feature type="binding site" evidence="1">
    <location>
        <position position="294"/>
    </location>
    <ligand>
        <name>substrate</name>
    </ligand>
</feature>
<feature type="binding site" evidence="1">
    <location>
        <position position="330"/>
    </location>
    <ligand>
        <name>substrate</name>
    </ligand>
</feature>
<feature type="binding site" evidence="1">
    <location>
        <begin position="350"/>
        <end position="352"/>
    </location>
    <ligand>
        <name>substrate</name>
    </ligand>
</feature>
<feature type="binding site" evidence="1">
    <location>
        <begin position="391"/>
        <end position="394"/>
    </location>
    <ligand>
        <name>substrate</name>
    </ligand>
</feature>
<feature type="binding site" evidence="1">
    <location>
        <position position="430"/>
    </location>
    <ligand>
        <name>substrate</name>
    </ligand>
</feature>
<feature type="binding site" evidence="1">
    <location>
        <position position="434"/>
    </location>
    <ligand>
        <name>Zn(2+)</name>
        <dbReference type="ChEBI" id="CHEBI:29105"/>
    </ligand>
</feature>
<feature type="binding site" evidence="1">
    <location>
        <position position="457"/>
    </location>
    <ligand>
        <name>substrate</name>
    </ligand>
</feature>
<feature type="binding site" evidence="1">
    <location>
        <position position="498"/>
    </location>
    <ligand>
        <name>Zn(2+)</name>
        <dbReference type="ChEBI" id="CHEBI:29105"/>
    </ligand>
</feature>
<feature type="binding site" evidence="1">
    <location>
        <position position="578"/>
    </location>
    <ligand>
        <name>[4Fe-4S] cluster</name>
        <dbReference type="ChEBI" id="CHEBI:49883"/>
        <note>4Fe-4S-S-AdoMet</note>
    </ligand>
</feature>
<feature type="binding site" evidence="1">
    <location>
        <position position="581"/>
    </location>
    <ligand>
        <name>[4Fe-4S] cluster</name>
        <dbReference type="ChEBI" id="CHEBI:49883"/>
        <note>4Fe-4S-S-AdoMet</note>
    </ligand>
</feature>
<feature type="binding site" evidence="1">
    <location>
        <position position="586"/>
    </location>
    <ligand>
        <name>[4Fe-4S] cluster</name>
        <dbReference type="ChEBI" id="CHEBI:49883"/>
        <note>4Fe-4S-S-AdoMet</note>
    </ligand>
</feature>
<reference key="1">
    <citation type="journal article" date="2005" name="Proc. Natl. Acad. Sci. U.S.A.">
        <title>Complete genome sequence of Vibrio fischeri: a symbiotic bacterium with pathogenic congeners.</title>
        <authorList>
            <person name="Ruby E.G."/>
            <person name="Urbanowski M."/>
            <person name="Campbell J."/>
            <person name="Dunn A."/>
            <person name="Faini M."/>
            <person name="Gunsalus R."/>
            <person name="Lostroh P."/>
            <person name="Lupp C."/>
            <person name="McCann J."/>
            <person name="Millikan D."/>
            <person name="Schaefer A."/>
            <person name="Stabb E."/>
            <person name="Stevens A."/>
            <person name="Visick K."/>
            <person name="Whistler C."/>
            <person name="Greenberg E.P."/>
        </authorList>
    </citation>
    <scope>NUCLEOTIDE SEQUENCE [LARGE SCALE GENOMIC DNA]</scope>
    <source>
        <strain>ATCC 700601 / ES114</strain>
    </source>
</reference>
<gene>
    <name evidence="1" type="primary">thiC</name>
    <name type="ordered locus">VF_0032</name>
</gene>
<keyword id="KW-0004">4Fe-4S</keyword>
<keyword id="KW-0408">Iron</keyword>
<keyword id="KW-0411">Iron-sulfur</keyword>
<keyword id="KW-0456">Lyase</keyword>
<keyword id="KW-0479">Metal-binding</keyword>
<keyword id="KW-1185">Reference proteome</keyword>
<keyword id="KW-0949">S-adenosyl-L-methionine</keyword>
<keyword id="KW-0784">Thiamine biosynthesis</keyword>
<keyword id="KW-0862">Zinc</keyword>
<name>THIC_ALIF1</name>